<feature type="chain" id="PRO_0000339472" description="ATP synthase subunit beta">
    <location>
        <begin position="1"/>
        <end position="464"/>
    </location>
</feature>
<feature type="binding site" evidence="1">
    <location>
        <begin position="148"/>
        <end position="155"/>
    </location>
    <ligand>
        <name>ATP</name>
        <dbReference type="ChEBI" id="CHEBI:30616"/>
    </ligand>
</feature>
<feature type="strand" evidence="2">
    <location>
        <begin position="3"/>
        <end position="10"/>
    </location>
</feature>
<feature type="strand" evidence="2">
    <location>
        <begin position="13"/>
        <end position="17"/>
    </location>
</feature>
<feature type="strand" evidence="2">
    <location>
        <begin position="29"/>
        <end position="35"/>
    </location>
</feature>
<feature type="strand" evidence="2">
    <location>
        <begin position="38"/>
        <end position="44"/>
    </location>
</feature>
<feature type="strand" evidence="2">
    <location>
        <begin position="46"/>
        <end position="56"/>
    </location>
</feature>
<feature type="strand" evidence="2">
    <location>
        <begin position="66"/>
        <end position="69"/>
    </location>
</feature>
<feature type="strand" evidence="2">
    <location>
        <begin position="75"/>
        <end position="77"/>
    </location>
</feature>
<feature type="helix" evidence="2">
    <location>
        <begin position="80"/>
        <end position="82"/>
    </location>
</feature>
<feature type="strand" evidence="2">
    <location>
        <begin position="95"/>
        <end position="97"/>
    </location>
</feature>
<feature type="strand" evidence="2">
    <location>
        <begin position="105"/>
        <end position="108"/>
    </location>
</feature>
<feature type="helix" evidence="2">
    <location>
        <begin position="130"/>
        <end position="135"/>
    </location>
</feature>
<feature type="strand" evidence="2">
    <location>
        <begin position="143"/>
        <end position="148"/>
    </location>
</feature>
<feature type="strand" evidence="2">
    <location>
        <begin position="150"/>
        <end position="153"/>
    </location>
</feature>
<feature type="helix" evidence="2">
    <location>
        <begin position="154"/>
        <end position="165"/>
    </location>
</feature>
<feature type="turn" evidence="2">
    <location>
        <begin position="166"/>
        <end position="168"/>
    </location>
</feature>
<feature type="strand" evidence="2">
    <location>
        <begin position="173"/>
        <end position="179"/>
    </location>
</feature>
<feature type="helix" evidence="2">
    <location>
        <begin position="182"/>
        <end position="194"/>
    </location>
</feature>
<feature type="helix" evidence="2">
    <location>
        <begin position="198"/>
        <end position="200"/>
    </location>
</feature>
<feature type="strand" evidence="2">
    <location>
        <begin position="201"/>
        <end position="206"/>
    </location>
</feature>
<feature type="helix" evidence="2">
    <location>
        <begin position="212"/>
        <end position="216"/>
    </location>
</feature>
<feature type="helix" evidence="2">
    <location>
        <begin position="219"/>
        <end position="230"/>
    </location>
</feature>
<feature type="strand" evidence="2">
    <location>
        <begin position="242"/>
        <end position="247"/>
    </location>
</feature>
<feature type="helix" evidence="2">
    <location>
        <begin position="250"/>
        <end position="258"/>
    </location>
</feature>
<feature type="helix" evidence="2">
    <location>
        <begin position="261"/>
        <end position="263"/>
    </location>
</feature>
<feature type="strand" evidence="2">
    <location>
        <begin position="269"/>
        <end position="271"/>
    </location>
</feature>
<feature type="helix" evidence="2">
    <location>
        <begin position="276"/>
        <end position="284"/>
    </location>
</feature>
<feature type="strand" evidence="2">
    <location>
        <begin position="295"/>
        <end position="302"/>
    </location>
</feature>
<feature type="helix" evidence="2">
    <location>
        <begin position="304"/>
        <end position="306"/>
    </location>
</feature>
<feature type="helix" evidence="2">
    <location>
        <begin position="311"/>
        <end position="316"/>
    </location>
</feature>
<feature type="helix" evidence="2">
    <location>
        <begin position="317"/>
        <end position="319"/>
    </location>
</feature>
<feature type="strand" evidence="2">
    <location>
        <begin position="321"/>
        <end position="326"/>
    </location>
</feature>
<feature type="helix" evidence="2">
    <location>
        <begin position="328"/>
        <end position="332"/>
    </location>
</feature>
<feature type="turn" evidence="2">
    <location>
        <begin position="341"/>
        <end position="343"/>
    </location>
</feature>
<feature type="helix" evidence="2">
    <location>
        <begin position="351"/>
        <end position="354"/>
    </location>
</feature>
<feature type="helix" evidence="2">
    <location>
        <begin position="356"/>
        <end position="375"/>
    </location>
</feature>
<feature type="helix" evidence="2">
    <location>
        <begin position="378"/>
        <end position="381"/>
    </location>
</feature>
<feature type="helix" evidence="2">
    <location>
        <begin position="384"/>
        <end position="386"/>
    </location>
</feature>
<feature type="helix" evidence="2">
    <location>
        <begin position="389"/>
        <end position="404"/>
    </location>
</feature>
<feature type="helix" evidence="2">
    <location>
        <begin position="412"/>
        <end position="414"/>
    </location>
</feature>
<feature type="helix" evidence="2">
    <location>
        <begin position="425"/>
        <end position="437"/>
    </location>
</feature>
<feature type="turn" evidence="2">
    <location>
        <begin position="438"/>
        <end position="442"/>
    </location>
</feature>
<feature type="helix" evidence="2">
    <location>
        <begin position="445"/>
        <end position="448"/>
    </location>
</feature>
<feature type="helix" evidence="2">
    <location>
        <begin position="454"/>
        <end position="463"/>
    </location>
</feature>
<gene>
    <name evidence="1" type="primary">atpD</name>
    <name type="ordered locus">A1S_0155</name>
</gene>
<sequence length="464" mass="50274">MSSGRIIQIIGAVIDVEFERTSVPKIYDALQVDGTETTLEVQQQLGDGVVRTIAMGSTEGLKRGLTVTSTNAPISVPVGTATLGRIMDVLGRPIDEAGPVATEERLPIHRQAPSYAEQAASTDLLETGIKVIDLLCPFAKGGKVGLFGGAGVGKTVNMMELINNIAKAHSGLSVFAGVGERTREGNDFYHEMKDSNVLDKVAMVYGQMNEPPGNRLRVALTGLTMAEYFRDEKDENGKGRDVLLFVDNIYRYTLAGTEVSALLGRMPSAVGYQPTLAEEMGVLQERITSTKSGSITSIQAVYVPADDLTDPSPATTFAHLDATVVLSRDIASSGIYPAIDPLDSTSRQLDPLVVGQEHYEIARAVQNVLQRYKELKDIIAILGMDELAEEDKLVVYRARKIQRFFSQPFHVAEVFTGAPGKLVPLKETIRGFKGLLAGEYDHIPEQAFYMVGGIDEVIAKAEKL</sequence>
<keyword id="KW-0002">3D-structure</keyword>
<keyword id="KW-0066">ATP synthesis</keyword>
<keyword id="KW-0067">ATP-binding</keyword>
<keyword id="KW-0997">Cell inner membrane</keyword>
<keyword id="KW-1003">Cell membrane</keyword>
<keyword id="KW-0139">CF(1)</keyword>
<keyword id="KW-0375">Hydrogen ion transport</keyword>
<keyword id="KW-0406">Ion transport</keyword>
<keyword id="KW-0472">Membrane</keyword>
<keyword id="KW-0547">Nucleotide-binding</keyword>
<keyword id="KW-1278">Translocase</keyword>
<keyword id="KW-0813">Transport</keyword>
<evidence type="ECO:0000255" key="1">
    <source>
        <dbReference type="HAMAP-Rule" id="MF_01347"/>
    </source>
</evidence>
<evidence type="ECO:0007829" key="2">
    <source>
        <dbReference type="PDB" id="7P2Y"/>
    </source>
</evidence>
<protein>
    <recommendedName>
        <fullName evidence="1">ATP synthase subunit beta</fullName>
        <ecNumber evidence="1">7.1.2.2</ecNumber>
    </recommendedName>
    <alternativeName>
        <fullName evidence="1">ATP synthase F1 sector subunit beta</fullName>
    </alternativeName>
    <alternativeName>
        <fullName evidence="1">F-ATPase subunit beta</fullName>
    </alternativeName>
</protein>
<accession>A3M144</accession>
<comment type="function">
    <text evidence="1">Produces ATP from ADP in the presence of a proton gradient across the membrane. The catalytic sites are hosted primarily by the beta subunits.</text>
</comment>
<comment type="catalytic activity">
    <reaction evidence="1">
        <text>ATP + H2O + 4 H(+)(in) = ADP + phosphate + 5 H(+)(out)</text>
        <dbReference type="Rhea" id="RHEA:57720"/>
        <dbReference type="ChEBI" id="CHEBI:15377"/>
        <dbReference type="ChEBI" id="CHEBI:15378"/>
        <dbReference type="ChEBI" id="CHEBI:30616"/>
        <dbReference type="ChEBI" id="CHEBI:43474"/>
        <dbReference type="ChEBI" id="CHEBI:456216"/>
        <dbReference type="EC" id="7.1.2.2"/>
    </reaction>
</comment>
<comment type="subunit">
    <text evidence="1">F-type ATPases have 2 components, CF(1) - the catalytic core - and CF(0) - the membrane proton channel. CF(1) has five subunits: alpha(3), beta(3), gamma(1), delta(1), epsilon(1). CF(0) has three main subunits: a(1), b(2) and c(9-12). The alpha and beta chains form an alternating ring which encloses part of the gamma chain. CF(1) is attached to CF(0) by a central stalk formed by the gamma and epsilon chains, while a peripheral stalk is formed by the delta and b chains.</text>
</comment>
<comment type="subcellular location">
    <subcellularLocation>
        <location evidence="1">Cell inner membrane</location>
        <topology evidence="1">Peripheral membrane protein</topology>
    </subcellularLocation>
</comment>
<comment type="similarity">
    <text evidence="1">Belongs to the ATPase alpha/beta chains family.</text>
</comment>
<proteinExistence type="evidence at protein level"/>
<name>ATPB_ACIBT</name>
<dbReference type="EC" id="7.1.2.2" evidence="1"/>
<dbReference type="EMBL" id="CP000521">
    <property type="protein sequence ID" value="ABO10638.2"/>
    <property type="molecule type" value="Genomic_DNA"/>
</dbReference>
<dbReference type="RefSeq" id="WP_000094481.1">
    <property type="nucleotide sequence ID" value="NZ_CP053098.1"/>
</dbReference>
<dbReference type="PDB" id="7P2Y">
    <property type="method" value="EM"/>
    <property type="resolution" value="3.10 A"/>
    <property type="chains" value="D/E/F=1-464"/>
</dbReference>
<dbReference type="PDB" id="7P3N">
    <property type="method" value="EM"/>
    <property type="resolution" value="4.60 A"/>
    <property type="chains" value="D/E/F=1-464"/>
</dbReference>
<dbReference type="PDB" id="7P3W">
    <property type="method" value="EM"/>
    <property type="resolution" value="4.30 A"/>
    <property type="chains" value="D/E/F=1-464"/>
</dbReference>
<dbReference type="PDB" id="7YRY">
    <property type="method" value="EM"/>
    <property type="resolution" value="3.00 A"/>
    <property type="chains" value="D/E/F=2-464"/>
</dbReference>
<dbReference type="PDB" id="8ZI0">
    <property type="method" value="EM"/>
    <property type="resolution" value="3.18 A"/>
    <property type="chains" value="D/E/F=1-464"/>
</dbReference>
<dbReference type="PDB" id="8ZI1">
    <property type="method" value="EM"/>
    <property type="resolution" value="2.92 A"/>
    <property type="chains" value="D/E/F=1-464"/>
</dbReference>
<dbReference type="PDB" id="8ZI2">
    <property type="method" value="EM"/>
    <property type="resolution" value="2.99 A"/>
    <property type="chains" value="D/E/F=1-464"/>
</dbReference>
<dbReference type="PDB" id="8ZI3">
    <property type="method" value="EM"/>
    <property type="resolution" value="2.89 A"/>
    <property type="chains" value="D/E/F=1-464"/>
</dbReference>
<dbReference type="PDBsum" id="7P2Y"/>
<dbReference type="PDBsum" id="7P3N"/>
<dbReference type="PDBsum" id="7P3W"/>
<dbReference type="PDBsum" id="7YRY"/>
<dbReference type="PDBsum" id="8ZI0"/>
<dbReference type="PDBsum" id="8ZI1"/>
<dbReference type="PDBsum" id="8ZI2"/>
<dbReference type="PDBsum" id="8ZI3"/>
<dbReference type="EMDB" id="EMD-13174"/>
<dbReference type="EMDB" id="EMD-13181"/>
<dbReference type="EMDB" id="EMD-13186"/>
<dbReference type="EMDB" id="EMD-34066"/>
<dbReference type="SMR" id="A3M144"/>
<dbReference type="GeneID" id="92892167"/>
<dbReference type="KEGG" id="acb:A1S_0155"/>
<dbReference type="HOGENOM" id="CLU_022398_0_2_6"/>
<dbReference type="GO" id="GO:0005886">
    <property type="term" value="C:plasma membrane"/>
    <property type="evidence" value="ECO:0007669"/>
    <property type="project" value="UniProtKB-SubCell"/>
</dbReference>
<dbReference type="GO" id="GO:0045259">
    <property type="term" value="C:proton-transporting ATP synthase complex"/>
    <property type="evidence" value="ECO:0007669"/>
    <property type="project" value="UniProtKB-KW"/>
</dbReference>
<dbReference type="GO" id="GO:0005524">
    <property type="term" value="F:ATP binding"/>
    <property type="evidence" value="ECO:0007669"/>
    <property type="project" value="UniProtKB-UniRule"/>
</dbReference>
<dbReference type="GO" id="GO:0016887">
    <property type="term" value="F:ATP hydrolysis activity"/>
    <property type="evidence" value="ECO:0007669"/>
    <property type="project" value="InterPro"/>
</dbReference>
<dbReference type="GO" id="GO:0046933">
    <property type="term" value="F:proton-transporting ATP synthase activity, rotational mechanism"/>
    <property type="evidence" value="ECO:0007669"/>
    <property type="project" value="UniProtKB-UniRule"/>
</dbReference>
<dbReference type="CDD" id="cd18110">
    <property type="entry name" value="ATP-synt_F1_beta_C"/>
    <property type="match status" value="1"/>
</dbReference>
<dbReference type="CDD" id="cd18115">
    <property type="entry name" value="ATP-synt_F1_beta_N"/>
    <property type="match status" value="1"/>
</dbReference>
<dbReference type="CDD" id="cd01133">
    <property type="entry name" value="F1-ATPase_beta_CD"/>
    <property type="match status" value="1"/>
</dbReference>
<dbReference type="FunFam" id="1.10.1140.10:FF:000001">
    <property type="entry name" value="ATP synthase subunit beta"/>
    <property type="match status" value="1"/>
</dbReference>
<dbReference type="FunFam" id="3.40.50.300:FF:000004">
    <property type="entry name" value="ATP synthase subunit beta"/>
    <property type="match status" value="1"/>
</dbReference>
<dbReference type="Gene3D" id="2.40.10.170">
    <property type="match status" value="1"/>
</dbReference>
<dbReference type="Gene3D" id="1.10.1140.10">
    <property type="entry name" value="Bovine Mitochondrial F1-atpase, Atp Synthase Beta Chain, Chain D, domain 3"/>
    <property type="match status" value="1"/>
</dbReference>
<dbReference type="Gene3D" id="3.40.50.300">
    <property type="entry name" value="P-loop containing nucleotide triphosphate hydrolases"/>
    <property type="match status" value="1"/>
</dbReference>
<dbReference type="HAMAP" id="MF_01347">
    <property type="entry name" value="ATP_synth_beta_bact"/>
    <property type="match status" value="1"/>
</dbReference>
<dbReference type="InterPro" id="IPR003593">
    <property type="entry name" value="AAA+_ATPase"/>
</dbReference>
<dbReference type="InterPro" id="IPR055190">
    <property type="entry name" value="ATP-synt_VA_C"/>
</dbReference>
<dbReference type="InterPro" id="IPR005722">
    <property type="entry name" value="ATP_synth_F1_bsu"/>
</dbReference>
<dbReference type="InterPro" id="IPR020003">
    <property type="entry name" value="ATPase_a/bsu_AS"/>
</dbReference>
<dbReference type="InterPro" id="IPR050053">
    <property type="entry name" value="ATPase_alpha/beta_chains"/>
</dbReference>
<dbReference type="InterPro" id="IPR004100">
    <property type="entry name" value="ATPase_F1/V1/A1_a/bsu_N"/>
</dbReference>
<dbReference type="InterPro" id="IPR036121">
    <property type="entry name" value="ATPase_F1/V1/A1_a/bsu_N_sf"/>
</dbReference>
<dbReference type="InterPro" id="IPR000194">
    <property type="entry name" value="ATPase_F1/V1/A1_a/bsu_nucl-bd"/>
</dbReference>
<dbReference type="InterPro" id="IPR024034">
    <property type="entry name" value="ATPase_F1/V1_b/a_C"/>
</dbReference>
<dbReference type="InterPro" id="IPR027417">
    <property type="entry name" value="P-loop_NTPase"/>
</dbReference>
<dbReference type="NCBIfam" id="TIGR01039">
    <property type="entry name" value="atpD"/>
    <property type="match status" value="1"/>
</dbReference>
<dbReference type="PANTHER" id="PTHR15184">
    <property type="entry name" value="ATP SYNTHASE"/>
    <property type="match status" value="1"/>
</dbReference>
<dbReference type="PANTHER" id="PTHR15184:SF71">
    <property type="entry name" value="ATP SYNTHASE SUBUNIT BETA, MITOCHONDRIAL"/>
    <property type="match status" value="1"/>
</dbReference>
<dbReference type="Pfam" id="PF00006">
    <property type="entry name" value="ATP-synt_ab"/>
    <property type="match status" value="1"/>
</dbReference>
<dbReference type="Pfam" id="PF02874">
    <property type="entry name" value="ATP-synt_ab_N"/>
    <property type="match status" value="1"/>
</dbReference>
<dbReference type="Pfam" id="PF22919">
    <property type="entry name" value="ATP-synt_VA_C"/>
    <property type="match status" value="1"/>
</dbReference>
<dbReference type="SMART" id="SM00382">
    <property type="entry name" value="AAA"/>
    <property type="match status" value="1"/>
</dbReference>
<dbReference type="SUPFAM" id="SSF47917">
    <property type="entry name" value="C-terminal domain of alpha and beta subunits of F1 ATP synthase"/>
    <property type="match status" value="1"/>
</dbReference>
<dbReference type="SUPFAM" id="SSF50615">
    <property type="entry name" value="N-terminal domain of alpha and beta subunits of F1 ATP synthase"/>
    <property type="match status" value="1"/>
</dbReference>
<dbReference type="SUPFAM" id="SSF52540">
    <property type="entry name" value="P-loop containing nucleoside triphosphate hydrolases"/>
    <property type="match status" value="1"/>
</dbReference>
<dbReference type="PROSITE" id="PS00152">
    <property type="entry name" value="ATPASE_ALPHA_BETA"/>
    <property type="match status" value="1"/>
</dbReference>
<reference key="1">
    <citation type="journal article" date="2007" name="Genes Dev.">
        <title>New insights into Acinetobacter baumannii pathogenesis revealed by high-density pyrosequencing and transposon mutagenesis.</title>
        <authorList>
            <person name="Smith M.G."/>
            <person name="Gianoulis T.A."/>
            <person name="Pukatzki S."/>
            <person name="Mekalanos J.J."/>
            <person name="Ornston L.N."/>
            <person name="Gerstein M."/>
            <person name="Snyder M."/>
        </authorList>
    </citation>
    <scope>NUCLEOTIDE SEQUENCE [LARGE SCALE GENOMIC DNA]</scope>
    <source>
        <strain>ATCC 17978 / DSM 105126 / CIP 53.77 / LMG 1025 / NCDC KC755 / 5377</strain>
    </source>
</reference>
<organism>
    <name type="scientific">Acinetobacter baumannii (strain ATCC 17978 / DSM 105126 / CIP 53.77 / LMG 1025 / NCDC KC755 / 5377)</name>
    <dbReference type="NCBI Taxonomy" id="400667"/>
    <lineage>
        <taxon>Bacteria</taxon>
        <taxon>Pseudomonadati</taxon>
        <taxon>Pseudomonadota</taxon>
        <taxon>Gammaproteobacteria</taxon>
        <taxon>Moraxellales</taxon>
        <taxon>Moraxellaceae</taxon>
        <taxon>Acinetobacter</taxon>
        <taxon>Acinetobacter calcoaceticus/baumannii complex</taxon>
    </lineage>
</organism>